<gene>
    <name type="primary">maf</name>
</gene>
<protein>
    <recommendedName>
        <fullName>Transcription factor Maf</fullName>
    </recommendedName>
</protein>
<organism>
    <name type="scientific">Xenopus tropicalis</name>
    <name type="common">Western clawed frog</name>
    <name type="synonym">Silurana tropicalis</name>
    <dbReference type="NCBI Taxonomy" id="8364"/>
    <lineage>
        <taxon>Eukaryota</taxon>
        <taxon>Metazoa</taxon>
        <taxon>Chordata</taxon>
        <taxon>Craniata</taxon>
        <taxon>Vertebrata</taxon>
        <taxon>Euteleostomi</taxon>
        <taxon>Amphibia</taxon>
        <taxon>Batrachia</taxon>
        <taxon>Anura</taxon>
        <taxon>Pipoidea</taxon>
        <taxon>Pipidae</taxon>
        <taxon>Xenopodinae</taxon>
        <taxon>Xenopus</taxon>
        <taxon>Silurana</taxon>
    </lineage>
</organism>
<sequence length="352" mass="38603">MASELAMSSSDLPTSPLAMEYVNDFDLMKFEVKKEPVETDRIISQCGRLIAGGSLSSTPMSTPCSSVPPSPSFSAPSPGSGSEQKSHLEDYYWMSAYPQQINPEALGFSPEDAVEALISNSNQQQQQQQQQQLQAGYDGFARGQQYASSGGMPGEDMGSAAAVVSAVIAAAAAQNPHHHHHHHHHSVGHQAGVQPPGGGTGGGGSSGSSTSSSVVGALHPPAAHHHHHHHHLHFDDRFSDEQLVTMSVRELNRQLRGVSKEEVIRLKQKRRTLKNRGYAQSCRFKRVQQRHVLESEKNQLLQQVEHLKQEISRLLRERDAYKEKYEKLLGSGFRENGSSNSDNPSSPEYFMS</sequence>
<comment type="function">
    <text evidence="1">Acts as a transcriptional activator or repressor.</text>
</comment>
<comment type="subunit">
    <text evidence="1">Homodimer or heterodimer. Binds DNA as a homodimer or a heterodimer (By similarity).</text>
</comment>
<comment type="subcellular location">
    <subcellularLocation>
        <location evidence="2">Nucleus</location>
    </subcellularLocation>
</comment>
<comment type="developmental stage">
    <text evidence="4">Expressed in the presumptive lens ectoderm at stage 24. Expressed in the pronephros from stage 28 onwards. Expressed in the forming tubules but also in the glomus of the pronephros from stage 33. Expressed in cells of the optic vesicle in a dorso-temporal location and in cells showing the expected dorsal location of Rohon-Beard neurons in the neural tube at stage 35.</text>
</comment>
<comment type="similarity">
    <text evidence="5">Belongs to the bZIP family. Maf subfamily.</text>
</comment>
<dbReference type="EMBL" id="BC121507">
    <property type="protein sequence ID" value="AAI21508.1"/>
    <property type="molecule type" value="mRNA"/>
</dbReference>
<dbReference type="EMBL" id="DQ018732">
    <property type="protein sequence ID" value="AAY41825.1"/>
    <property type="molecule type" value="mRNA"/>
</dbReference>
<dbReference type="RefSeq" id="NP_001027476.1">
    <property type="nucleotide sequence ID" value="NM_001032305.1"/>
</dbReference>
<dbReference type="SMR" id="Q0V9K1"/>
<dbReference type="FunCoup" id="Q0V9K1">
    <property type="interactions" value="1236"/>
</dbReference>
<dbReference type="STRING" id="8364.ENSXETP00000012614"/>
<dbReference type="PaxDb" id="8364-ENSXETP00000000359"/>
<dbReference type="DNASU" id="613051"/>
<dbReference type="GeneID" id="613051"/>
<dbReference type="KEGG" id="xtr:613051"/>
<dbReference type="AGR" id="Xenbase:XB-GENE-6053271"/>
<dbReference type="CTD" id="4094"/>
<dbReference type="Xenbase" id="XB-GENE-6053271">
    <property type="gene designation" value="maf"/>
</dbReference>
<dbReference type="eggNOG" id="KOG4196">
    <property type="taxonomic scope" value="Eukaryota"/>
</dbReference>
<dbReference type="HOGENOM" id="CLU_063062_0_0_1"/>
<dbReference type="InParanoid" id="Q0V9K1"/>
<dbReference type="OrthoDB" id="5974330at2759"/>
<dbReference type="TreeFam" id="TF325689"/>
<dbReference type="Proteomes" id="UP000008143">
    <property type="component" value="Chromosome 4"/>
</dbReference>
<dbReference type="Bgee" id="ENSXETG00000000172">
    <property type="expression patterns" value="Expressed in skeletal muscle tissue and 12 other cell types or tissues"/>
</dbReference>
<dbReference type="ExpressionAtlas" id="Q0V9K1">
    <property type="expression patterns" value="baseline"/>
</dbReference>
<dbReference type="GO" id="GO:0005634">
    <property type="term" value="C:nucleus"/>
    <property type="evidence" value="ECO:0007669"/>
    <property type="project" value="UniProtKB-SubCell"/>
</dbReference>
<dbReference type="GO" id="GO:0003677">
    <property type="term" value="F:DNA binding"/>
    <property type="evidence" value="ECO:0007669"/>
    <property type="project" value="UniProtKB-KW"/>
</dbReference>
<dbReference type="GO" id="GO:0003700">
    <property type="term" value="F:DNA-binding transcription factor activity"/>
    <property type="evidence" value="ECO:0007669"/>
    <property type="project" value="InterPro"/>
</dbReference>
<dbReference type="CDD" id="cd14718">
    <property type="entry name" value="bZIP_Maf_large"/>
    <property type="match status" value="1"/>
</dbReference>
<dbReference type="FunFam" id="1.20.5.170:FF:000016">
    <property type="entry name" value="MAF bZIP transcription factor"/>
    <property type="match status" value="1"/>
</dbReference>
<dbReference type="Gene3D" id="1.20.5.170">
    <property type="match status" value="1"/>
</dbReference>
<dbReference type="InterPro" id="IPR004827">
    <property type="entry name" value="bZIP"/>
</dbReference>
<dbReference type="InterPro" id="IPR004826">
    <property type="entry name" value="bZIP_Maf"/>
</dbReference>
<dbReference type="InterPro" id="IPR046347">
    <property type="entry name" value="bZIP_sf"/>
</dbReference>
<dbReference type="InterPro" id="IPR013592">
    <property type="entry name" value="Maf_TF_N"/>
</dbReference>
<dbReference type="InterPro" id="IPR008917">
    <property type="entry name" value="TF_DNA-bd_sf"/>
</dbReference>
<dbReference type="InterPro" id="IPR024874">
    <property type="entry name" value="Transcription_factor_Maf_fam"/>
</dbReference>
<dbReference type="PANTHER" id="PTHR10129">
    <property type="entry name" value="TRANSCRIPTION FACTOR MAF"/>
    <property type="match status" value="1"/>
</dbReference>
<dbReference type="PANTHER" id="PTHR10129:SF9">
    <property type="entry name" value="TRANSCRIPTION FACTOR MAF"/>
    <property type="match status" value="1"/>
</dbReference>
<dbReference type="Pfam" id="PF03131">
    <property type="entry name" value="bZIP_Maf"/>
    <property type="match status" value="1"/>
</dbReference>
<dbReference type="Pfam" id="PF08383">
    <property type="entry name" value="Maf_N"/>
    <property type="match status" value="1"/>
</dbReference>
<dbReference type="SMART" id="SM00338">
    <property type="entry name" value="BRLZ"/>
    <property type="match status" value="1"/>
</dbReference>
<dbReference type="SUPFAM" id="SSF47454">
    <property type="entry name" value="A DNA-binding domain in eukaryotic transcription factors"/>
    <property type="match status" value="1"/>
</dbReference>
<dbReference type="SUPFAM" id="SSF57959">
    <property type="entry name" value="Leucine zipper domain"/>
    <property type="match status" value="1"/>
</dbReference>
<dbReference type="PROSITE" id="PS50217">
    <property type="entry name" value="BZIP"/>
    <property type="match status" value="1"/>
</dbReference>
<feature type="chain" id="PRO_0000364084" description="Transcription factor Maf">
    <location>
        <begin position="1"/>
        <end position="352"/>
    </location>
</feature>
<feature type="domain" description="bZIP" evidence="2">
    <location>
        <begin position="265"/>
        <end position="328"/>
    </location>
</feature>
<feature type="region of interest" description="Disordered" evidence="3">
    <location>
        <begin position="57"/>
        <end position="85"/>
    </location>
</feature>
<feature type="region of interest" description="Disordered" evidence="3">
    <location>
        <begin position="173"/>
        <end position="234"/>
    </location>
</feature>
<feature type="region of interest" description="Basic motif" evidence="2">
    <location>
        <begin position="265"/>
        <end position="290"/>
    </location>
</feature>
<feature type="region of interest" description="Leucine-zipper" evidence="2">
    <location>
        <begin position="293"/>
        <end position="314"/>
    </location>
</feature>
<feature type="region of interest" description="Disordered" evidence="3">
    <location>
        <begin position="331"/>
        <end position="352"/>
    </location>
</feature>
<feature type="compositionally biased region" description="Low complexity" evidence="3">
    <location>
        <begin position="72"/>
        <end position="82"/>
    </location>
</feature>
<feature type="compositionally biased region" description="Basic residues" evidence="3">
    <location>
        <begin position="176"/>
        <end position="187"/>
    </location>
</feature>
<feature type="compositionally biased region" description="Gly residues" evidence="3">
    <location>
        <begin position="195"/>
        <end position="206"/>
    </location>
</feature>
<feature type="compositionally biased region" description="Low complexity" evidence="3">
    <location>
        <begin position="207"/>
        <end position="221"/>
    </location>
</feature>
<feature type="compositionally biased region" description="Basic residues" evidence="3">
    <location>
        <begin position="222"/>
        <end position="232"/>
    </location>
</feature>
<feature type="compositionally biased region" description="Low complexity" evidence="3">
    <location>
        <begin position="338"/>
        <end position="352"/>
    </location>
</feature>
<feature type="sequence conflict" description="In Ref. 2; AAY41825." evidence="5" ref="2">
    <original>NPSS</original>
    <variation>KYFM</variation>
    <location>
        <begin position="343"/>
        <end position="346"/>
    </location>
</feature>
<keyword id="KW-0010">Activator</keyword>
<keyword id="KW-0238">DNA-binding</keyword>
<keyword id="KW-0539">Nucleus</keyword>
<keyword id="KW-1185">Reference proteome</keyword>
<keyword id="KW-0678">Repressor</keyword>
<keyword id="KW-0804">Transcription</keyword>
<keyword id="KW-0805">Transcription regulation</keyword>
<evidence type="ECO:0000250" key="1"/>
<evidence type="ECO:0000255" key="2">
    <source>
        <dbReference type="PROSITE-ProRule" id="PRU00978"/>
    </source>
</evidence>
<evidence type="ECO:0000256" key="3">
    <source>
        <dbReference type="SAM" id="MobiDB-lite"/>
    </source>
</evidence>
<evidence type="ECO:0000269" key="4">
    <source>
    </source>
</evidence>
<evidence type="ECO:0000305" key="5"/>
<reference key="1">
    <citation type="submission" date="2006-08" db="EMBL/GenBank/DDBJ databases">
        <authorList>
            <consortium name="NIH - Xenopus Gene Collection (XGC) project"/>
        </authorList>
    </citation>
    <scope>NUCLEOTIDE SEQUENCE [LARGE SCALE MRNA]</scope>
    <source>
        <strain>N6</strain>
        <tissue>Fat body</tissue>
    </source>
</reference>
<reference key="2">
    <citation type="journal article" date="2005" name="Dev. Genes Evol.">
        <title>Phylogenomic analysis and expression patterns of large Maf genes in Xenopus tropicalis provide new insights into the functional evolution of the gene family in osteichthyans.</title>
        <authorList>
            <person name="Coolen M."/>
            <person name="Sii-Felice K."/>
            <person name="Bronchain O."/>
            <person name="Mazabraud A."/>
            <person name="Bourrat F."/>
            <person name="Retaux S."/>
            <person name="Felder-Schmittbuhl M.-P."/>
            <person name="Mazan S."/>
            <person name="Plouhinec J.-L."/>
        </authorList>
    </citation>
    <scope>NUCLEOTIDE SEQUENCE [MRNA] OF 1-346</scope>
    <scope>DEVELOPMENTAL STAGE</scope>
    <source>
        <tissue>Embryo</tissue>
    </source>
</reference>
<proteinExistence type="evidence at transcript level"/>
<accession>Q0V9K1</accession>
<accession>Q4U1U0</accession>
<name>MAF_XENTR</name>